<dbReference type="EC" id="2.7.4.3" evidence="1"/>
<dbReference type="EMBL" id="CP000116">
    <property type="protein sequence ID" value="AAZ97457.1"/>
    <property type="molecule type" value="Genomic_DNA"/>
</dbReference>
<dbReference type="RefSeq" id="WP_011312016.1">
    <property type="nucleotide sequence ID" value="NC_007404.1"/>
</dbReference>
<dbReference type="SMR" id="Q3SIR8"/>
<dbReference type="STRING" id="292415.Tbd_1504"/>
<dbReference type="KEGG" id="tbd:Tbd_1504"/>
<dbReference type="eggNOG" id="COG0563">
    <property type="taxonomic scope" value="Bacteria"/>
</dbReference>
<dbReference type="HOGENOM" id="CLU_032354_1_2_4"/>
<dbReference type="OrthoDB" id="9805030at2"/>
<dbReference type="UniPathway" id="UPA00588">
    <property type="reaction ID" value="UER00649"/>
</dbReference>
<dbReference type="Proteomes" id="UP000008291">
    <property type="component" value="Chromosome"/>
</dbReference>
<dbReference type="GO" id="GO:0005737">
    <property type="term" value="C:cytoplasm"/>
    <property type="evidence" value="ECO:0007669"/>
    <property type="project" value="UniProtKB-SubCell"/>
</dbReference>
<dbReference type="GO" id="GO:0004017">
    <property type="term" value="F:adenylate kinase activity"/>
    <property type="evidence" value="ECO:0007669"/>
    <property type="project" value="UniProtKB-UniRule"/>
</dbReference>
<dbReference type="GO" id="GO:0005524">
    <property type="term" value="F:ATP binding"/>
    <property type="evidence" value="ECO:0007669"/>
    <property type="project" value="UniProtKB-UniRule"/>
</dbReference>
<dbReference type="GO" id="GO:0044209">
    <property type="term" value="P:AMP salvage"/>
    <property type="evidence" value="ECO:0007669"/>
    <property type="project" value="UniProtKB-UniRule"/>
</dbReference>
<dbReference type="CDD" id="cd01428">
    <property type="entry name" value="ADK"/>
    <property type="match status" value="1"/>
</dbReference>
<dbReference type="FunFam" id="3.40.50.300:FF:000106">
    <property type="entry name" value="Adenylate kinase mitochondrial"/>
    <property type="match status" value="1"/>
</dbReference>
<dbReference type="Gene3D" id="3.40.50.300">
    <property type="entry name" value="P-loop containing nucleotide triphosphate hydrolases"/>
    <property type="match status" value="1"/>
</dbReference>
<dbReference type="HAMAP" id="MF_00235">
    <property type="entry name" value="Adenylate_kinase_Adk"/>
    <property type="match status" value="1"/>
</dbReference>
<dbReference type="InterPro" id="IPR006259">
    <property type="entry name" value="Adenyl_kin_sub"/>
</dbReference>
<dbReference type="InterPro" id="IPR000850">
    <property type="entry name" value="Adenylat/UMP-CMP_kin"/>
</dbReference>
<dbReference type="InterPro" id="IPR033690">
    <property type="entry name" value="Adenylat_kinase_CS"/>
</dbReference>
<dbReference type="InterPro" id="IPR007862">
    <property type="entry name" value="Adenylate_kinase_lid-dom"/>
</dbReference>
<dbReference type="InterPro" id="IPR027417">
    <property type="entry name" value="P-loop_NTPase"/>
</dbReference>
<dbReference type="NCBIfam" id="TIGR01351">
    <property type="entry name" value="adk"/>
    <property type="match status" value="1"/>
</dbReference>
<dbReference type="NCBIfam" id="NF001379">
    <property type="entry name" value="PRK00279.1-1"/>
    <property type="match status" value="1"/>
</dbReference>
<dbReference type="NCBIfam" id="NF001380">
    <property type="entry name" value="PRK00279.1-2"/>
    <property type="match status" value="1"/>
</dbReference>
<dbReference type="NCBIfam" id="NF001381">
    <property type="entry name" value="PRK00279.1-3"/>
    <property type="match status" value="1"/>
</dbReference>
<dbReference type="NCBIfam" id="NF011100">
    <property type="entry name" value="PRK14527.1"/>
    <property type="match status" value="1"/>
</dbReference>
<dbReference type="PANTHER" id="PTHR23359">
    <property type="entry name" value="NUCLEOTIDE KINASE"/>
    <property type="match status" value="1"/>
</dbReference>
<dbReference type="Pfam" id="PF00406">
    <property type="entry name" value="ADK"/>
    <property type="match status" value="1"/>
</dbReference>
<dbReference type="Pfam" id="PF05191">
    <property type="entry name" value="ADK_lid"/>
    <property type="match status" value="1"/>
</dbReference>
<dbReference type="PRINTS" id="PR00094">
    <property type="entry name" value="ADENYLTKNASE"/>
</dbReference>
<dbReference type="SUPFAM" id="SSF52540">
    <property type="entry name" value="P-loop containing nucleoside triphosphate hydrolases"/>
    <property type="match status" value="1"/>
</dbReference>
<dbReference type="PROSITE" id="PS00113">
    <property type="entry name" value="ADENYLATE_KINASE"/>
    <property type="match status" value="1"/>
</dbReference>
<comment type="function">
    <text evidence="1">Catalyzes the reversible transfer of the terminal phosphate group between ATP and AMP. Plays an important role in cellular energy homeostasis and in adenine nucleotide metabolism.</text>
</comment>
<comment type="catalytic activity">
    <reaction evidence="1">
        <text>AMP + ATP = 2 ADP</text>
        <dbReference type="Rhea" id="RHEA:12973"/>
        <dbReference type="ChEBI" id="CHEBI:30616"/>
        <dbReference type="ChEBI" id="CHEBI:456215"/>
        <dbReference type="ChEBI" id="CHEBI:456216"/>
        <dbReference type="EC" id="2.7.4.3"/>
    </reaction>
</comment>
<comment type="pathway">
    <text evidence="1">Purine metabolism; AMP biosynthesis via salvage pathway; AMP from ADP: step 1/1.</text>
</comment>
<comment type="subunit">
    <text evidence="1">Monomer.</text>
</comment>
<comment type="subcellular location">
    <subcellularLocation>
        <location evidence="1">Cytoplasm</location>
    </subcellularLocation>
</comment>
<comment type="domain">
    <text evidence="1">Consists of three domains, a large central CORE domain and two small peripheral domains, NMPbind and LID, which undergo movements during catalysis. The LID domain closes over the site of phosphoryl transfer upon ATP binding. Assembling and dissambling the active center during each catalytic cycle provides an effective means to prevent ATP hydrolysis.</text>
</comment>
<comment type="similarity">
    <text evidence="1">Belongs to the adenylate kinase family.</text>
</comment>
<reference key="1">
    <citation type="journal article" date="2006" name="J. Bacteriol.">
        <title>The genome sequence of the obligately chemolithoautotrophic, facultatively anaerobic bacterium Thiobacillus denitrificans.</title>
        <authorList>
            <person name="Beller H.R."/>
            <person name="Chain P.S."/>
            <person name="Letain T.E."/>
            <person name="Chakicherla A."/>
            <person name="Larimer F.W."/>
            <person name="Richardson P.M."/>
            <person name="Coleman M.A."/>
            <person name="Wood A.P."/>
            <person name="Kelly D.P."/>
        </authorList>
    </citation>
    <scope>NUCLEOTIDE SEQUENCE [LARGE SCALE GENOMIC DNA]</scope>
    <source>
        <strain>ATCC 25259 / T1</strain>
    </source>
</reference>
<proteinExistence type="inferred from homology"/>
<feature type="chain" id="PRO_1000058931" description="Adenylate kinase">
    <location>
        <begin position="1"/>
        <end position="217"/>
    </location>
</feature>
<feature type="region of interest" description="NMP" evidence="1">
    <location>
        <begin position="30"/>
        <end position="59"/>
    </location>
</feature>
<feature type="region of interest" description="LID" evidence="1">
    <location>
        <begin position="122"/>
        <end position="159"/>
    </location>
</feature>
<feature type="binding site" evidence="1">
    <location>
        <begin position="10"/>
        <end position="15"/>
    </location>
    <ligand>
        <name>ATP</name>
        <dbReference type="ChEBI" id="CHEBI:30616"/>
    </ligand>
</feature>
<feature type="binding site" evidence="1">
    <location>
        <position position="31"/>
    </location>
    <ligand>
        <name>AMP</name>
        <dbReference type="ChEBI" id="CHEBI:456215"/>
    </ligand>
</feature>
<feature type="binding site" evidence="1">
    <location>
        <position position="36"/>
    </location>
    <ligand>
        <name>AMP</name>
        <dbReference type="ChEBI" id="CHEBI:456215"/>
    </ligand>
</feature>
<feature type="binding site" evidence="1">
    <location>
        <begin position="57"/>
        <end position="59"/>
    </location>
    <ligand>
        <name>AMP</name>
        <dbReference type="ChEBI" id="CHEBI:456215"/>
    </ligand>
</feature>
<feature type="binding site" evidence="1">
    <location>
        <begin position="85"/>
        <end position="88"/>
    </location>
    <ligand>
        <name>AMP</name>
        <dbReference type="ChEBI" id="CHEBI:456215"/>
    </ligand>
</feature>
<feature type="binding site" evidence="1">
    <location>
        <position position="92"/>
    </location>
    <ligand>
        <name>AMP</name>
        <dbReference type="ChEBI" id="CHEBI:456215"/>
    </ligand>
</feature>
<feature type="binding site" evidence="1">
    <location>
        <position position="123"/>
    </location>
    <ligand>
        <name>ATP</name>
        <dbReference type="ChEBI" id="CHEBI:30616"/>
    </ligand>
</feature>
<feature type="binding site" evidence="1">
    <location>
        <begin position="132"/>
        <end position="133"/>
    </location>
    <ligand>
        <name>ATP</name>
        <dbReference type="ChEBI" id="CHEBI:30616"/>
    </ligand>
</feature>
<feature type="binding site" evidence="1">
    <location>
        <position position="156"/>
    </location>
    <ligand>
        <name>AMP</name>
        <dbReference type="ChEBI" id="CHEBI:456215"/>
    </ligand>
</feature>
<feature type="binding site" evidence="1">
    <location>
        <position position="167"/>
    </location>
    <ligand>
        <name>AMP</name>
        <dbReference type="ChEBI" id="CHEBI:456215"/>
    </ligand>
</feature>
<feature type="binding site" evidence="1">
    <location>
        <position position="203"/>
    </location>
    <ligand>
        <name>ATP</name>
        <dbReference type="ChEBI" id="CHEBI:30616"/>
    </ligand>
</feature>
<sequence>MRLILLGGPGAGKGTQANYIKEKYGIPQISTGDMLRAQIKAGTELGMKAKAIMDAGGLVSDDIIIGMVKARLQEADCKNGYLFDGFPRTIPQAEAMKAAGVPIDYVVEIDVADEEIIKRMSGRRVHVASGRTYHVVFNPPKVAGKDDVTGEDLIQRDDDQEETVKKRLDVYHAQTEPLVKYYGDWAARGEAGAPKYVKISGVGKVEQIRDSIFAALG</sequence>
<name>KAD_THIDA</name>
<protein>
    <recommendedName>
        <fullName evidence="1">Adenylate kinase</fullName>
        <shortName evidence="1">AK</shortName>
        <ecNumber evidence="1">2.7.4.3</ecNumber>
    </recommendedName>
    <alternativeName>
        <fullName evidence="1">ATP-AMP transphosphorylase</fullName>
    </alternativeName>
    <alternativeName>
        <fullName evidence="1">ATP:AMP phosphotransferase</fullName>
    </alternativeName>
    <alternativeName>
        <fullName evidence="1">Adenylate monophosphate kinase</fullName>
    </alternativeName>
</protein>
<organism>
    <name type="scientific">Thiobacillus denitrificans (strain ATCC 25259 / T1)</name>
    <dbReference type="NCBI Taxonomy" id="292415"/>
    <lineage>
        <taxon>Bacteria</taxon>
        <taxon>Pseudomonadati</taxon>
        <taxon>Pseudomonadota</taxon>
        <taxon>Betaproteobacteria</taxon>
        <taxon>Nitrosomonadales</taxon>
        <taxon>Thiobacillaceae</taxon>
        <taxon>Thiobacillus</taxon>
    </lineage>
</organism>
<keyword id="KW-0067">ATP-binding</keyword>
<keyword id="KW-0963">Cytoplasm</keyword>
<keyword id="KW-0418">Kinase</keyword>
<keyword id="KW-0545">Nucleotide biosynthesis</keyword>
<keyword id="KW-0547">Nucleotide-binding</keyword>
<keyword id="KW-1185">Reference proteome</keyword>
<keyword id="KW-0808">Transferase</keyword>
<gene>
    <name evidence="1" type="primary">adk</name>
    <name type="ordered locus">Tbd_1504</name>
</gene>
<accession>Q3SIR8</accession>
<evidence type="ECO:0000255" key="1">
    <source>
        <dbReference type="HAMAP-Rule" id="MF_00235"/>
    </source>
</evidence>